<dbReference type="EMBL" id="CP000671">
    <property type="protein sequence ID" value="ABQ98908.1"/>
    <property type="molecule type" value="Genomic_DNA"/>
</dbReference>
<dbReference type="SMR" id="A5UDQ7"/>
<dbReference type="KEGG" id="hip:CGSHiEE_07975"/>
<dbReference type="HOGENOM" id="CLU_085336_1_0_6"/>
<dbReference type="GO" id="GO:0005829">
    <property type="term" value="C:cytosol"/>
    <property type="evidence" value="ECO:0007669"/>
    <property type="project" value="TreeGrafter"/>
</dbReference>
<dbReference type="FunFam" id="1.20.120.740:FF:000001">
    <property type="entry name" value="UPF0149 protein YgfB"/>
    <property type="match status" value="1"/>
</dbReference>
<dbReference type="Gene3D" id="1.20.120.740">
    <property type="entry name" value="YgfB uncharacterised protein family UPF0149, PF03695"/>
    <property type="match status" value="1"/>
</dbReference>
<dbReference type="HAMAP" id="MF_00346">
    <property type="entry name" value="UPF0149"/>
    <property type="match status" value="1"/>
</dbReference>
<dbReference type="InterPro" id="IPR011978">
    <property type="entry name" value="YgfB-like"/>
</dbReference>
<dbReference type="InterPro" id="IPR036255">
    <property type="entry name" value="YgfB-like_sf"/>
</dbReference>
<dbReference type="NCBIfam" id="NF002477">
    <property type="entry name" value="PRK01736.1"/>
    <property type="match status" value="1"/>
</dbReference>
<dbReference type="NCBIfam" id="TIGR02292">
    <property type="entry name" value="ygfB_yecA"/>
    <property type="match status" value="1"/>
</dbReference>
<dbReference type="PANTHER" id="PTHR37528">
    <property type="entry name" value="UPF0149 PROTEIN YGFB"/>
    <property type="match status" value="1"/>
</dbReference>
<dbReference type="PANTHER" id="PTHR37528:SF1">
    <property type="entry name" value="UPF0149 PROTEIN YGFB"/>
    <property type="match status" value="1"/>
</dbReference>
<dbReference type="Pfam" id="PF03695">
    <property type="entry name" value="UPF0149"/>
    <property type="match status" value="1"/>
</dbReference>
<dbReference type="SUPFAM" id="SSF101327">
    <property type="entry name" value="YgfB-like"/>
    <property type="match status" value="1"/>
</dbReference>
<reference key="1">
    <citation type="journal article" date="2007" name="Genome Biol.">
        <title>Characterization and modeling of the Haemophilus influenzae core and supragenomes based on the complete genomic sequences of Rd and 12 clinical nontypeable strains.</title>
        <authorList>
            <person name="Hogg J.S."/>
            <person name="Hu F.Z."/>
            <person name="Janto B."/>
            <person name="Boissy R."/>
            <person name="Hayes J."/>
            <person name="Keefe R."/>
            <person name="Post J.C."/>
            <person name="Ehrlich G.D."/>
        </authorList>
    </citation>
    <scope>NUCLEOTIDE SEQUENCE [LARGE SCALE GENOMIC DNA]</scope>
    <source>
        <strain>PittEE</strain>
    </source>
</reference>
<protein>
    <recommendedName>
        <fullName evidence="1">UPF0149 protein CGSHiEE_07975</fullName>
    </recommendedName>
</protein>
<feature type="chain" id="PRO_1000013042" description="UPF0149 protein CGSHiEE_07975">
    <location>
        <begin position="1"/>
        <end position="182"/>
    </location>
</feature>
<organism>
    <name type="scientific">Haemophilus influenzae (strain PittEE)</name>
    <dbReference type="NCBI Taxonomy" id="374930"/>
    <lineage>
        <taxon>Bacteria</taxon>
        <taxon>Pseudomonadati</taxon>
        <taxon>Pseudomonadota</taxon>
        <taxon>Gammaproteobacteria</taxon>
        <taxon>Pasteurellales</taxon>
        <taxon>Pasteurellaceae</taxon>
        <taxon>Haemophilus</taxon>
    </lineage>
</organism>
<gene>
    <name type="ordered locus">CGSHiEE_07975</name>
</gene>
<accession>A5UDQ7</accession>
<sequence>MLISHSDLNQQLKSAGIGFNATELHGFLSGLLCGGLKDQSWLPLLYQFSNDNHAYPTALVQPVTELYEKISQTLSDVEGFTFGLGLTEDENVFAQADSLSDWANQFLLGLGLAQPELAKEKGEIGEAVDDLQDICQLGYNEDDNEEELAEALEEIIEYVRTIAMLFYSHFNEGEIESKPVLH</sequence>
<evidence type="ECO:0000255" key="1">
    <source>
        <dbReference type="HAMAP-Rule" id="MF_00346"/>
    </source>
</evidence>
<name>Y7975_HAEIE</name>
<comment type="similarity">
    <text evidence="1">Belongs to the UPF0149 family.</text>
</comment>
<proteinExistence type="inferred from homology"/>